<organism>
    <name type="scientific">Escherichia coli (strain K12)</name>
    <dbReference type="NCBI Taxonomy" id="83333"/>
    <lineage>
        <taxon>Bacteria</taxon>
        <taxon>Pseudomonadati</taxon>
        <taxon>Pseudomonadota</taxon>
        <taxon>Gammaproteobacteria</taxon>
        <taxon>Enterobacterales</taxon>
        <taxon>Enterobacteriaceae</taxon>
        <taxon>Escherichia</taxon>
    </lineage>
</organism>
<proteinExistence type="evidence at protein level"/>
<comment type="function">
    <text evidence="1 3">Transcription regulator that activates transcription by stimulating RNA polymerase (RNAP) recycling in case of stress conditions such as supercoiled DNA or high salt concentrations. Probably acts by releasing the RNAP, when it is trapped or immobilized on tightly supercoiled DNA. Does not activate transcription on linear DNA. Probably not involved in DNA repair (By similarity).</text>
</comment>
<comment type="subunit">
    <text evidence="1">Interacts with the RNAP. Has a higher affinity for the core RNAP than for the holoenzyme. Its ATPase activity is stimulated by binding to RNAP (By similarity).</text>
</comment>
<comment type="interaction">
    <interactant intactId="EBI-551542">
        <id>P60240</id>
    </interactant>
    <interactant intactId="EBI-544996">
        <id>P0A8V2</id>
        <label>rpoB</label>
    </interactant>
    <organismsDiffer>false</organismsDiffer>
    <experiments>5</experiments>
</comment>
<comment type="developmental stage">
    <text evidence="2">During growth phase, peaking during at the early log phase.</text>
</comment>
<comment type="similarity">
    <text evidence="6">Belongs to the SNF2/RAD54 helicase family. RapA subfamily.</text>
</comment>
<name>RAPA_ECOLI</name>
<feature type="initiator methionine" description="Removed" evidence="4 5">
    <location>
        <position position="1"/>
    </location>
</feature>
<feature type="chain" id="PRO_0000207172" description="RNA polymerase-associated protein RapA">
    <location>
        <begin position="2"/>
        <end position="968"/>
    </location>
</feature>
<feature type="domain" description="Helicase ATP-binding">
    <location>
        <begin position="164"/>
        <end position="334"/>
    </location>
</feature>
<feature type="domain" description="Helicase C-terminal">
    <location>
        <begin position="490"/>
        <end position="662"/>
    </location>
</feature>
<feature type="short sequence motif" description="DEAH box">
    <location>
        <begin position="280"/>
        <end position="283"/>
    </location>
</feature>
<feature type="binding site" evidence="1">
    <location>
        <begin position="177"/>
        <end position="184"/>
    </location>
    <ligand>
        <name>ATP</name>
        <dbReference type="ChEBI" id="CHEBI:30616"/>
    </ligand>
</feature>
<feature type="mutagenesis site" description="Loss of function. Still interacts with RNAP." evidence="3">
    <original>K</original>
    <variation>A</variation>
    <location>
        <position position="183"/>
    </location>
</feature>
<feature type="mutagenesis site" description="Loss of function. Still interacts with RNAP." evidence="3">
    <original>DE</original>
    <variation>AA</variation>
    <location>
        <begin position="280"/>
        <end position="281"/>
    </location>
</feature>
<feature type="sequence conflict" description="In Ref. 7; AA sequence." evidence="6" ref="7">
    <original>S</original>
    <variation>V</variation>
    <location>
        <position position="11"/>
    </location>
</feature>
<feature type="sequence conflict" description="In Ref. 4." evidence="6" ref="4">
    <original>CAKAATALQLEQVLREREGIRAAVFHEGM</original>
    <variation>RGIRNHGHSCFLCEIVIRSQFHTTYEPEA</variation>
    <location>
        <begin position="510"/>
        <end position="538"/>
    </location>
</feature>
<feature type="strand" evidence="8">
    <location>
        <begin position="8"/>
        <end position="10"/>
    </location>
</feature>
<feature type="helix" evidence="8">
    <location>
        <begin position="15"/>
        <end position="17"/>
    </location>
</feature>
<feature type="strand" evidence="8">
    <location>
        <begin position="20"/>
        <end position="25"/>
    </location>
</feature>
<feature type="strand" evidence="8">
    <location>
        <begin position="27"/>
        <end position="33"/>
    </location>
</feature>
<feature type="turn" evidence="8">
    <location>
        <begin position="35"/>
        <end position="37"/>
    </location>
</feature>
<feature type="strand" evidence="8">
    <location>
        <begin position="40"/>
        <end position="45"/>
    </location>
</feature>
<feature type="strand" evidence="7">
    <location>
        <begin position="50"/>
        <end position="52"/>
    </location>
</feature>
<feature type="strand" evidence="8">
    <location>
        <begin position="60"/>
        <end position="63"/>
    </location>
</feature>
<feature type="strand" evidence="8">
    <location>
        <begin position="68"/>
        <end position="77"/>
    </location>
</feature>
<feature type="strand" evidence="8">
    <location>
        <begin position="80"/>
        <end position="87"/>
    </location>
</feature>
<feature type="turn" evidence="8">
    <location>
        <begin position="88"/>
        <end position="91"/>
    </location>
</feature>
<feature type="strand" evidence="8">
    <location>
        <begin position="92"/>
        <end position="98"/>
    </location>
</feature>
<feature type="helix" evidence="8">
    <location>
        <begin position="99"/>
        <end position="101"/>
    </location>
</feature>
<feature type="helix" evidence="8">
    <location>
        <begin position="111"/>
        <end position="116"/>
    </location>
</feature>
<feature type="strand" evidence="8">
    <location>
        <begin position="117"/>
        <end position="119"/>
    </location>
</feature>
<feature type="helix" evidence="8">
    <location>
        <begin position="123"/>
        <end position="140"/>
    </location>
</feature>
<feature type="turn" evidence="8">
    <location>
        <begin position="143"/>
        <end position="146"/>
    </location>
</feature>
<feature type="strand" evidence="8">
    <location>
        <begin position="147"/>
        <end position="152"/>
    </location>
</feature>
<feature type="helix" evidence="8">
    <location>
        <begin position="156"/>
        <end position="166"/>
    </location>
</feature>
<feature type="strand" evidence="8">
    <location>
        <begin position="168"/>
        <end position="170"/>
    </location>
</feature>
<feature type="strand" evidence="8">
    <location>
        <begin position="172"/>
        <end position="175"/>
    </location>
</feature>
<feature type="helix" evidence="8">
    <location>
        <begin position="183"/>
        <end position="196"/>
    </location>
</feature>
<feature type="strand" evidence="8">
    <location>
        <begin position="203"/>
        <end position="206"/>
    </location>
</feature>
<feature type="helix" evidence="8">
    <location>
        <begin position="209"/>
        <end position="223"/>
    </location>
</feature>
<feature type="helix" evidence="8">
    <location>
        <begin position="232"/>
        <end position="241"/>
    </location>
</feature>
<feature type="helix" evidence="8">
    <location>
        <begin position="245"/>
        <end position="247"/>
    </location>
</feature>
<feature type="strand" evidence="8">
    <location>
        <begin position="250"/>
        <end position="254"/>
    </location>
</feature>
<feature type="helix" evidence="8">
    <location>
        <begin position="256"/>
        <end position="259"/>
    </location>
</feature>
<feature type="helix" evidence="8">
    <location>
        <begin position="263"/>
        <end position="271"/>
    </location>
</feature>
<feature type="strand" evidence="8">
    <location>
        <begin position="275"/>
        <end position="280"/>
    </location>
</feature>
<feature type="helix" evidence="8">
    <location>
        <begin position="282"/>
        <end position="284"/>
    </location>
</feature>
<feature type="helix" evidence="8">
    <location>
        <begin position="294"/>
        <end position="302"/>
    </location>
</feature>
<feature type="turn" evidence="7">
    <location>
        <begin position="303"/>
        <end position="305"/>
    </location>
</feature>
<feature type="strand" evidence="8">
    <location>
        <begin position="307"/>
        <end position="312"/>
    </location>
</feature>
<feature type="helix" evidence="7">
    <location>
        <begin position="316"/>
        <end position="318"/>
    </location>
</feature>
<feature type="helix" evidence="8">
    <location>
        <begin position="321"/>
        <end position="324"/>
    </location>
</feature>
<feature type="helix" evidence="8">
    <location>
        <begin position="325"/>
        <end position="331"/>
    </location>
</feature>
<feature type="turn" evidence="8">
    <location>
        <begin position="333"/>
        <end position="335"/>
    </location>
</feature>
<feature type="helix" evidence="8">
    <location>
        <begin position="339"/>
        <end position="361"/>
    </location>
</feature>
<feature type="helix" evidence="8">
    <location>
        <begin position="367"/>
        <end position="376"/>
    </location>
</feature>
<feature type="helix" evidence="8">
    <location>
        <begin position="382"/>
        <end position="391"/>
    </location>
</feature>
<feature type="helix" evidence="8">
    <location>
        <begin position="396"/>
        <end position="410"/>
    </location>
</feature>
<feature type="turn" evidence="8">
    <location>
        <begin position="414"/>
        <end position="416"/>
    </location>
</feature>
<feature type="strand" evidence="8">
    <location>
        <begin position="422"/>
        <end position="424"/>
    </location>
</feature>
<feature type="strand" evidence="8">
    <location>
        <begin position="431"/>
        <end position="438"/>
    </location>
</feature>
<feature type="helix" evidence="8">
    <location>
        <begin position="442"/>
        <end position="454"/>
    </location>
</feature>
<feature type="strand" evidence="8">
    <location>
        <begin position="456"/>
        <end position="458"/>
    </location>
</feature>
<feature type="helix" evidence="8">
    <location>
        <begin position="460"/>
        <end position="467"/>
    </location>
</feature>
<feature type="helix" evidence="8">
    <location>
        <begin position="470"/>
        <end position="472"/>
    </location>
</feature>
<feature type="helix" evidence="8">
    <location>
        <begin position="474"/>
        <end position="477"/>
    </location>
</feature>
<feature type="helix" evidence="8">
    <location>
        <begin position="484"/>
        <end position="486"/>
    </location>
</feature>
<feature type="helix" evidence="8">
    <location>
        <begin position="489"/>
        <end position="500"/>
    </location>
</feature>
<feature type="strand" evidence="8">
    <location>
        <begin position="506"/>
        <end position="509"/>
    </location>
</feature>
<feature type="helix" evidence="8">
    <location>
        <begin position="513"/>
        <end position="527"/>
    </location>
</feature>
<feature type="strand" evidence="7">
    <location>
        <begin position="531"/>
        <end position="534"/>
    </location>
</feature>
<feature type="helix" evidence="8">
    <location>
        <begin position="540"/>
        <end position="551"/>
    </location>
</feature>
<feature type="turn" evidence="8">
    <location>
        <begin position="553"/>
        <end position="555"/>
    </location>
</feature>
<feature type="strand" evidence="8">
    <location>
        <begin position="558"/>
        <end position="560"/>
    </location>
</feature>
<feature type="strand" evidence="8">
    <location>
        <begin position="577"/>
        <end position="582"/>
    </location>
</feature>
<feature type="helix" evidence="8">
    <location>
        <begin position="587"/>
        <end position="595"/>
    </location>
</feature>
<feature type="strand" evidence="8">
    <location>
        <begin position="606"/>
        <end position="616"/>
    </location>
</feature>
<feature type="helix" evidence="8">
    <location>
        <begin position="617"/>
        <end position="626"/>
    </location>
</feature>
<feature type="turn" evidence="8">
    <location>
        <begin position="627"/>
        <end position="629"/>
    </location>
</feature>
<feature type="turn" evidence="8">
    <location>
        <begin position="631"/>
        <end position="633"/>
    </location>
</feature>
<feature type="helix" evidence="8">
    <location>
        <begin position="639"/>
        <end position="655"/>
    </location>
</feature>
<feature type="helix" evidence="8">
    <location>
        <begin position="663"/>
        <end position="683"/>
    </location>
</feature>
<feature type="helix" evidence="8">
    <location>
        <begin position="687"/>
        <end position="694"/>
    </location>
</feature>
<feature type="helix" evidence="8">
    <location>
        <begin position="696"/>
        <end position="709"/>
    </location>
</feature>
<feature type="helix" evidence="8">
    <location>
        <begin position="713"/>
        <end position="726"/>
    </location>
</feature>
<feature type="strand" evidence="8">
    <location>
        <begin position="729"/>
        <end position="732"/>
    </location>
</feature>
<feature type="strand" evidence="8">
    <location>
        <begin position="734"/>
        <end position="736"/>
    </location>
</feature>
<feature type="strand" evidence="8">
    <location>
        <begin position="738"/>
        <end position="741"/>
    </location>
</feature>
<feature type="strand" evidence="8">
    <location>
        <begin position="747"/>
        <end position="749"/>
    </location>
</feature>
<feature type="strand" evidence="8">
    <location>
        <begin position="759"/>
        <end position="763"/>
    </location>
</feature>
<feature type="helix" evidence="8">
    <location>
        <begin position="765"/>
        <end position="770"/>
    </location>
</feature>
<feature type="strand" evidence="8">
    <location>
        <begin position="774"/>
        <end position="776"/>
    </location>
</feature>
<feature type="helix" evidence="8">
    <location>
        <begin position="782"/>
        <end position="793"/>
    </location>
</feature>
<feature type="strand" evidence="8">
    <location>
        <begin position="798"/>
        <end position="804"/>
    </location>
</feature>
<feature type="strand" evidence="8">
    <location>
        <begin position="814"/>
        <end position="823"/>
    </location>
</feature>
<feature type="helix" evidence="8">
    <location>
        <begin position="828"/>
        <end position="830"/>
    </location>
</feature>
<feature type="helix" evidence="8">
    <location>
        <begin position="832"/>
        <end position="834"/>
    </location>
</feature>
<feature type="strand" evidence="8">
    <location>
        <begin position="839"/>
        <end position="845"/>
    </location>
</feature>
<feature type="turn" evidence="8">
    <location>
        <begin position="853"/>
        <end position="855"/>
    </location>
</feature>
<feature type="helix" evidence="8">
    <location>
        <begin position="858"/>
        <end position="863"/>
    </location>
</feature>
<feature type="helix" evidence="8">
    <location>
        <begin position="870"/>
        <end position="878"/>
    </location>
</feature>
<feature type="helix" evidence="8">
    <location>
        <begin position="881"/>
        <end position="925"/>
    </location>
</feature>
<feature type="helix" evidence="8">
    <location>
        <begin position="933"/>
        <end position="951"/>
    </location>
</feature>
<feature type="strand" evidence="8">
    <location>
        <begin position="954"/>
        <end position="965"/>
    </location>
</feature>
<keyword id="KW-0002">3D-structure</keyword>
<keyword id="KW-0010">Activator</keyword>
<keyword id="KW-0067">ATP-binding</keyword>
<keyword id="KW-0903">Direct protein sequencing</keyword>
<keyword id="KW-0238">DNA-binding</keyword>
<keyword id="KW-0347">Helicase</keyword>
<keyword id="KW-0378">Hydrolase</keyword>
<keyword id="KW-0547">Nucleotide-binding</keyword>
<keyword id="KW-1185">Reference proteome</keyword>
<keyword id="KW-0804">Transcription</keyword>
<keyword id="KW-0805">Transcription regulation</keyword>
<protein>
    <recommendedName>
        <fullName>RNA polymerase-associated protein RapA</fullName>
        <ecNumber>3.6.4.-</ecNumber>
    </recommendedName>
    <alternativeName>
        <fullName>ATP-dependent helicase HepA</fullName>
    </alternativeName>
</protein>
<reference key="1">
    <citation type="journal article" date="1992" name="Nucleic Acids Res.">
        <title>Systematic sequencing of the Escherichia coli genome: analysis of the 0-2.4 min region.</title>
        <authorList>
            <person name="Yura T."/>
            <person name="Mori H."/>
            <person name="Nagai H."/>
            <person name="Nagata T."/>
            <person name="Ishihama A."/>
            <person name="Fujita N."/>
            <person name="Isono K."/>
            <person name="Mizobuchi K."/>
            <person name="Nakata A."/>
        </authorList>
    </citation>
    <scope>NUCLEOTIDE SEQUENCE [LARGE SCALE GENOMIC DNA]</scope>
    <source>
        <strain>K12</strain>
    </source>
</reference>
<reference key="2">
    <citation type="journal article" date="1997" name="Science">
        <title>The complete genome sequence of Escherichia coli K-12.</title>
        <authorList>
            <person name="Blattner F.R."/>
            <person name="Plunkett G. III"/>
            <person name="Bloch C.A."/>
            <person name="Perna N.T."/>
            <person name="Burland V."/>
            <person name="Riley M."/>
            <person name="Collado-Vides J."/>
            <person name="Glasner J.D."/>
            <person name="Rode C.K."/>
            <person name="Mayhew G.F."/>
            <person name="Gregor J."/>
            <person name="Davis N.W."/>
            <person name="Kirkpatrick H.A."/>
            <person name="Goeden M.A."/>
            <person name="Rose D.J."/>
            <person name="Mau B."/>
            <person name="Shao Y."/>
        </authorList>
    </citation>
    <scope>NUCLEOTIDE SEQUENCE [LARGE SCALE GENOMIC DNA]</scope>
    <source>
        <strain>K12 / MG1655 / ATCC 47076</strain>
    </source>
</reference>
<reference key="3">
    <citation type="journal article" date="2006" name="Mol. Syst. Biol.">
        <title>Highly accurate genome sequences of Escherichia coli K-12 strains MG1655 and W3110.</title>
        <authorList>
            <person name="Hayashi K."/>
            <person name="Morooka N."/>
            <person name="Yamamoto Y."/>
            <person name="Fujita K."/>
            <person name="Isono K."/>
            <person name="Choi S."/>
            <person name="Ohtsubo E."/>
            <person name="Baba T."/>
            <person name="Wanner B.L."/>
            <person name="Mori H."/>
            <person name="Horiuchi T."/>
        </authorList>
    </citation>
    <scope>NUCLEOTIDE SEQUENCE [LARGE SCALE GENOMIC DNA]</scope>
    <source>
        <strain>K12 / W3110 / ATCC 27325 / DSM 5911</strain>
    </source>
</reference>
<reference key="4">
    <citation type="journal article" date="1992" name="J. Bacteriol.">
        <title>Isolation of DNA damage-inducible promoters in Escherichia coli: regulation of polB (dinA), dinG, and dinH by LexA repressor.</title>
        <authorList>
            <person name="Lewis L.K."/>
            <person name="Jenkins M.E."/>
            <person name="Mount D.W."/>
        </authorList>
    </citation>
    <scope>NUCLEOTIDE SEQUENCE [GENOMIC DNA] OF 1-538</scope>
    <source>
        <strain>K12</strain>
    </source>
</reference>
<reference key="5">
    <citation type="journal article" date="1991" name="Mol. Gen. Genet.">
        <title>Escherichia coli DNA polymerase II is homologous to alpha-like DNA polymerases.</title>
        <authorList>
            <person name="Iwasaki H."/>
            <person name="Ishino Y."/>
            <person name="Toh H."/>
            <person name="Nakata A."/>
            <person name="Shinagawa H."/>
        </authorList>
    </citation>
    <scope>NUCLEOTIDE SEQUENCE [GENOMIC DNA] OF 1-422</scope>
    <source>
        <strain>K12 / W3110 / ATCC 27325 / DSM 5911</strain>
    </source>
</reference>
<reference key="6">
    <citation type="journal article" date="1993" name="Nucleic Acids Res.">
        <title>An expanding family of helicases within the 'DEAD/H' superfamily.</title>
        <authorList>
            <person name="Bork P."/>
            <person name="Koonin E.V."/>
        </authorList>
    </citation>
    <scope>IDENTIFICATION OF FRAMESHIFT</scope>
</reference>
<reference key="7">
    <citation type="journal article" date="1998" name="J. Biol. Chem.">
        <title>RapA, a novel RNA polymerase-associated protein, is a bacterial homolog of SWI2/SNF2.</title>
        <authorList>
            <person name="Sukhodolets M.V."/>
            <person name="Jin D.J."/>
        </authorList>
    </citation>
    <scope>PROTEIN SEQUENCE OF 2-11</scope>
    <scope>INTERACTION WITH RNAP</scope>
    <source>
        <strain>K12</strain>
    </source>
</reference>
<reference key="8">
    <citation type="journal article" date="1998" name="J. Biol. Chem.">
        <title>Disruption of Escherichia coli hepA, an RNA polymerase-associated protein, causes UV sensitivity.</title>
        <authorList>
            <person name="Muzzin O."/>
            <person name="Campbell E.A."/>
            <person name="Xia L."/>
            <person name="Severinova E."/>
            <person name="Darst S.A."/>
            <person name="Severinov K."/>
        </authorList>
    </citation>
    <scope>PROTEIN SEQUENCE OF 2-19</scope>
    <scope>INTERACTION WITH RNAP</scope>
</reference>
<reference key="9">
    <citation type="journal article" date="2000" name="J. Biol. Chem.">
        <title>Interaction between RNA polymerase and RapA, a bacterial homolog of the SWI/SNF protein family.</title>
        <authorList>
            <person name="Sukhodolets M.V."/>
            <person name="Jin D.J."/>
        </authorList>
    </citation>
    <scope>INTERACTION WITH RNAP</scope>
</reference>
<reference key="10">
    <citation type="journal article" date="2001" name="J. Bacteriol.">
        <title>Growth phase and growth rate regulation of the rapA gene, encoding the RNA polymerase-associated protein RapA in Escherichia coli.</title>
        <authorList>
            <person name="Cabrera J.E."/>
            <person name="Jin D.J."/>
        </authorList>
    </citation>
    <scope>DEVELOPMENTAL STAGE</scope>
</reference>
<reference key="11">
    <citation type="journal article" date="2001" name="Genes Dev.">
        <title>RapA, a bacterial homolog of SWI2/SNF2, stimulates RNA polymerase recycling in transcription.</title>
        <authorList>
            <person name="Sukhodolets M.V."/>
            <person name="Cabrera J.E."/>
            <person name="Zhi H."/>
            <person name="Jin D.J."/>
        </authorList>
    </citation>
    <scope>FUNCTION</scope>
    <scope>DNA-BINDING</scope>
    <scope>MUTAGENESIS OF LYS-183 AND 280-ASP-GLU-281</scope>
</reference>
<gene>
    <name type="primary">rapA</name>
    <name type="synonym">hepA</name>
    <name type="synonym">yabA</name>
    <name type="ordered locus">b0059</name>
    <name type="ordered locus">JW0058</name>
</gene>
<dbReference type="EC" id="3.6.4.-"/>
<dbReference type="EMBL" id="X54847">
    <property type="protein sequence ID" value="CAA38617.1"/>
    <property type="molecule type" value="Genomic_DNA"/>
</dbReference>
<dbReference type="EMBL" id="U00096">
    <property type="protein sequence ID" value="AAC73170.1"/>
    <property type="molecule type" value="Genomic_DNA"/>
</dbReference>
<dbReference type="EMBL" id="AP009048">
    <property type="protein sequence ID" value="BAB96627.1"/>
    <property type="molecule type" value="Genomic_DNA"/>
</dbReference>
<dbReference type="PIR" id="C64727">
    <property type="entry name" value="C64727"/>
</dbReference>
<dbReference type="RefSeq" id="NP_414601.1">
    <property type="nucleotide sequence ID" value="NC_000913.3"/>
</dbReference>
<dbReference type="RefSeq" id="WP_001117011.1">
    <property type="nucleotide sequence ID" value="NZ_STEB01000010.1"/>
</dbReference>
<dbReference type="PDB" id="4S20">
    <property type="method" value="X-ray"/>
    <property type="resolution" value="4.70 A"/>
    <property type="chains" value="K/L=1-968"/>
</dbReference>
<dbReference type="PDB" id="6BOG">
    <property type="method" value="X-ray"/>
    <property type="resolution" value="3.20 A"/>
    <property type="chains" value="A/B=1-968"/>
</dbReference>
<dbReference type="PDB" id="7M8E">
    <property type="method" value="EM"/>
    <property type="resolution" value="3.40 A"/>
    <property type="chains" value="F=1-968"/>
</dbReference>
<dbReference type="PDB" id="7MKN">
    <property type="method" value="EM"/>
    <property type="resolution" value="3.30 A"/>
    <property type="chains" value="L=1-968"/>
</dbReference>
<dbReference type="PDB" id="7MKQ">
    <property type="method" value="EM"/>
    <property type="resolution" value="4.80 A"/>
    <property type="chains" value="L=1-968"/>
</dbReference>
<dbReference type="PDB" id="8SO8">
    <property type="method" value="X-ray"/>
    <property type="resolution" value="2.61 A"/>
    <property type="chains" value="A=108-968"/>
</dbReference>
<dbReference type="PDB" id="8SP4">
    <property type="method" value="X-ray"/>
    <property type="resolution" value="2.40 A"/>
    <property type="chains" value="A=108-968"/>
</dbReference>
<dbReference type="PDB" id="8SPG">
    <property type="method" value="X-ray"/>
    <property type="resolution" value="2.10 A"/>
    <property type="chains" value="A=108-968"/>
</dbReference>
<dbReference type="PDBsum" id="4S20"/>
<dbReference type="PDBsum" id="6BOG"/>
<dbReference type="PDBsum" id="7M8E"/>
<dbReference type="PDBsum" id="7MKN"/>
<dbReference type="PDBsum" id="7MKQ"/>
<dbReference type="PDBsum" id="8SO8"/>
<dbReference type="PDBsum" id="8SP4"/>
<dbReference type="PDBsum" id="8SPG"/>
<dbReference type="EMDB" id="EMD-23900"/>
<dbReference type="EMDB" id="EMD-23903"/>
<dbReference type="SMR" id="P60240"/>
<dbReference type="BioGRID" id="4262039">
    <property type="interactions" value="367"/>
</dbReference>
<dbReference type="BioGRID" id="852817">
    <property type="interactions" value="5"/>
</dbReference>
<dbReference type="DIP" id="DIP-35881N"/>
<dbReference type="FunCoup" id="P60240">
    <property type="interactions" value="179"/>
</dbReference>
<dbReference type="IntAct" id="P60240">
    <property type="interactions" value="20"/>
</dbReference>
<dbReference type="STRING" id="511145.b0059"/>
<dbReference type="jPOST" id="P60240"/>
<dbReference type="PaxDb" id="511145-b0059"/>
<dbReference type="EnsemblBacteria" id="AAC73170">
    <property type="protein sequence ID" value="AAC73170"/>
    <property type="gene ID" value="b0059"/>
</dbReference>
<dbReference type="GeneID" id="75202125"/>
<dbReference type="GeneID" id="948523"/>
<dbReference type="KEGG" id="ecj:JW0058"/>
<dbReference type="KEGG" id="eco:b0059"/>
<dbReference type="PATRIC" id="fig|1411691.4.peg.2224"/>
<dbReference type="EchoBASE" id="EB1075"/>
<dbReference type="eggNOG" id="COG0553">
    <property type="taxonomic scope" value="Bacteria"/>
</dbReference>
<dbReference type="HOGENOM" id="CLU_011520_0_0_6"/>
<dbReference type="InParanoid" id="P60240"/>
<dbReference type="OMA" id="MSILERD"/>
<dbReference type="OrthoDB" id="9814088at2"/>
<dbReference type="PhylomeDB" id="P60240"/>
<dbReference type="BioCyc" id="EcoCyc:EG11083-MONOMER"/>
<dbReference type="EvolutionaryTrace" id="P60240"/>
<dbReference type="PRO" id="PR:P60240"/>
<dbReference type="Proteomes" id="UP000000625">
    <property type="component" value="Chromosome"/>
</dbReference>
<dbReference type="GO" id="GO:0005737">
    <property type="term" value="C:cytoplasm"/>
    <property type="evidence" value="ECO:0000314"/>
    <property type="project" value="EcoCyc"/>
</dbReference>
<dbReference type="GO" id="GO:0005524">
    <property type="term" value="F:ATP binding"/>
    <property type="evidence" value="ECO:0007669"/>
    <property type="project" value="UniProtKB-UniRule"/>
</dbReference>
<dbReference type="GO" id="GO:0016887">
    <property type="term" value="F:ATP hydrolysis activity"/>
    <property type="evidence" value="ECO:0000314"/>
    <property type="project" value="EcoCyc"/>
</dbReference>
<dbReference type="GO" id="GO:0001000">
    <property type="term" value="F:bacterial-type RNA polymerase core enzyme binding"/>
    <property type="evidence" value="ECO:0000314"/>
    <property type="project" value="EcoCyc"/>
</dbReference>
<dbReference type="GO" id="GO:0003682">
    <property type="term" value="F:chromatin binding"/>
    <property type="evidence" value="ECO:0000318"/>
    <property type="project" value="GO_Central"/>
</dbReference>
<dbReference type="GO" id="GO:0003677">
    <property type="term" value="F:DNA binding"/>
    <property type="evidence" value="ECO:0000318"/>
    <property type="project" value="GO_Central"/>
</dbReference>
<dbReference type="GO" id="GO:0004386">
    <property type="term" value="F:helicase activity"/>
    <property type="evidence" value="ECO:0007669"/>
    <property type="project" value="UniProtKB-UniRule"/>
</dbReference>
<dbReference type="GO" id="GO:0003676">
    <property type="term" value="F:nucleic acid binding"/>
    <property type="evidence" value="ECO:0000314"/>
    <property type="project" value="EcoCyc"/>
</dbReference>
<dbReference type="GO" id="GO:0140750">
    <property type="term" value="F:nucleosome array spacer activity"/>
    <property type="evidence" value="ECO:0000318"/>
    <property type="project" value="GO_Central"/>
</dbReference>
<dbReference type="GO" id="GO:0045893">
    <property type="term" value="P:positive regulation of DNA-templated transcription"/>
    <property type="evidence" value="ECO:0000314"/>
    <property type="project" value="EcoCyc"/>
</dbReference>
<dbReference type="GO" id="GO:0045944">
    <property type="term" value="P:positive regulation of transcription by RNA polymerase II"/>
    <property type="evidence" value="ECO:0000318"/>
    <property type="project" value="GO_Central"/>
</dbReference>
<dbReference type="CDD" id="cd18011">
    <property type="entry name" value="DEXDc_RapA"/>
    <property type="match status" value="1"/>
</dbReference>
<dbReference type="CDD" id="cd18793">
    <property type="entry name" value="SF2_C_SNF"/>
    <property type="match status" value="1"/>
</dbReference>
<dbReference type="FunFam" id="2.30.30.140:FF:000020">
    <property type="entry name" value="RNA polymerase-associated protein RapA"/>
    <property type="match status" value="1"/>
</dbReference>
<dbReference type="FunFam" id="2.30.30.930:FF:000001">
    <property type="entry name" value="RNA polymerase-associated protein RapA"/>
    <property type="match status" value="1"/>
</dbReference>
<dbReference type="FunFam" id="3.30.360.80:FF:000001">
    <property type="entry name" value="RNA polymerase-associated protein RapA"/>
    <property type="match status" value="1"/>
</dbReference>
<dbReference type="FunFam" id="3.40.50.10810:FF:000012">
    <property type="entry name" value="RNA polymerase-associated protein RapA"/>
    <property type="match status" value="1"/>
</dbReference>
<dbReference type="FunFam" id="3.40.50.300:FF:000350">
    <property type="entry name" value="RNA polymerase-associated protein RapA"/>
    <property type="match status" value="1"/>
</dbReference>
<dbReference type="Gene3D" id="2.30.30.140">
    <property type="match status" value="1"/>
</dbReference>
<dbReference type="Gene3D" id="2.30.30.930">
    <property type="match status" value="1"/>
</dbReference>
<dbReference type="Gene3D" id="3.30.360.80">
    <property type="match status" value="1"/>
</dbReference>
<dbReference type="Gene3D" id="6.10.140.1500">
    <property type="match status" value="1"/>
</dbReference>
<dbReference type="Gene3D" id="6.10.140.2230">
    <property type="match status" value="1"/>
</dbReference>
<dbReference type="Gene3D" id="3.40.50.300">
    <property type="entry name" value="P-loop containing nucleotide triphosphate hydrolases"/>
    <property type="match status" value="1"/>
</dbReference>
<dbReference type="Gene3D" id="3.40.50.10810">
    <property type="entry name" value="Tandem AAA-ATPase domain"/>
    <property type="match status" value="1"/>
</dbReference>
<dbReference type="HAMAP" id="MF_01821">
    <property type="entry name" value="Helicase_RapA"/>
    <property type="match status" value="1"/>
</dbReference>
<dbReference type="InterPro" id="IPR014001">
    <property type="entry name" value="Helicase_ATP-bd"/>
</dbReference>
<dbReference type="InterPro" id="IPR001650">
    <property type="entry name" value="Helicase_C-like"/>
</dbReference>
<dbReference type="InterPro" id="IPR023949">
    <property type="entry name" value="Helicase_RapA"/>
</dbReference>
<dbReference type="InterPro" id="IPR027417">
    <property type="entry name" value="P-loop_NTPase"/>
</dbReference>
<dbReference type="InterPro" id="IPR022737">
    <property type="entry name" value="RapA_C"/>
</dbReference>
<dbReference type="InterPro" id="IPR038718">
    <property type="entry name" value="SNF2-like_sf"/>
</dbReference>
<dbReference type="InterPro" id="IPR049730">
    <property type="entry name" value="SNF2/RAD54-like_C"/>
</dbReference>
<dbReference type="InterPro" id="IPR000330">
    <property type="entry name" value="SNF2_N"/>
</dbReference>
<dbReference type="InterPro" id="IPR040765">
    <property type="entry name" value="Tudor_1_RapA"/>
</dbReference>
<dbReference type="InterPro" id="IPR040766">
    <property type="entry name" value="Tudor_2_RapA"/>
</dbReference>
<dbReference type="NCBIfam" id="NF003426">
    <property type="entry name" value="PRK04914.1"/>
    <property type="match status" value="1"/>
</dbReference>
<dbReference type="PANTHER" id="PTHR45766">
    <property type="entry name" value="DNA ANNEALING HELICASE AND ENDONUCLEASE ZRANB3 FAMILY MEMBER"/>
    <property type="match status" value="1"/>
</dbReference>
<dbReference type="PANTHER" id="PTHR45766:SF6">
    <property type="entry name" value="SWI_SNF-RELATED MATRIX-ASSOCIATED ACTIN-DEPENDENT REGULATOR OF CHROMATIN SUBFAMILY A-LIKE PROTEIN 1"/>
    <property type="match status" value="1"/>
</dbReference>
<dbReference type="Pfam" id="PF00271">
    <property type="entry name" value="Helicase_C"/>
    <property type="match status" value="1"/>
</dbReference>
<dbReference type="Pfam" id="PF12137">
    <property type="entry name" value="RapA_C"/>
    <property type="match status" value="1"/>
</dbReference>
<dbReference type="Pfam" id="PF00176">
    <property type="entry name" value="SNF2-rel_dom"/>
    <property type="match status" value="1"/>
</dbReference>
<dbReference type="Pfam" id="PF18339">
    <property type="entry name" value="Tudor_1_RapA"/>
    <property type="match status" value="1"/>
</dbReference>
<dbReference type="Pfam" id="PF18337">
    <property type="entry name" value="Tudor_RapA"/>
    <property type="match status" value="1"/>
</dbReference>
<dbReference type="SMART" id="SM00487">
    <property type="entry name" value="DEXDc"/>
    <property type="match status" value="1"/>
</dbReference>
<dbReference type="SMART" id="SM00490">
    <property type="entry name" value="HELICc"/>
    <property type="match status" value="1"/>
</dbReference>
<dbReference type="SUPFAM" id="SSF52540">
    <property type="entry name" value="P-loop containing nucleoside triphosphate hydrolases"/>
    <property type="match status" value="2"/>
</dbReference>
<dbReference type="PROSITE" id="PS51192">
    <property type="entry name" value="HELICASE_ATP_BIND_1"/>
    <property type="match status" value="1"/>
</dbReference>
<dbReference type="PROSITE" id="PS51194">
    <property type="entry name" value="HELICASE_CTER"/>
    <property type="match status" value="1"/>
</dbReference>
<accession>P60240</accession>
<accession>P23852</accession>
<accession>P75633</accession>
<sequence length="968" mass="109769">MPFTLGQRWISDTESELGLGTVVAVDARTVTLLFPSTGENRLYARSDSPVTRVMFNPGDTITSHDGWQMQVEEVKEENGLLTYIGTRLDTEESGVALREVFLDSKLVFSKPQDRLFAGQIDRMDRFALRYRARKYSSEQFRMPYSGLRGQRTSLIPHQLNIAHDVGRRHAPRVLLADEVGLGKTIEAGMILHQQLLSGAAERVLIIVPETLQHQWLVEMLRRFNLRFALFDDERYAEAQHDAYNPFDTEQLVICSLDFARRSKQRLEHLCEAEWDLLVVDEAHHLVWSEDAPSREYQAIEQLAEHVPGVLLLTATPEQLGMESHFARLRLLDPNRFHDFAQFVEEQKNYRPVADAVAMLLAGNKLSNDELNMLGEMIGEQDIEPLLQAANSDSEDAQSARQELVSMLMDRHGTSRVLFRNTRNGVKGFPKRELHTIKLPLPTQYQTAIKVSGIMGARKSAEDRARDMLYPERIYQEFEGDNATWWNFDPRVEWLMGYLTSHRSQKVLVICAKAATALQLEQVLREREGIRAAVFHEGMSIIERDRAAAWFAEEDTGAQVLLCSEIGSEGRNFQFASHMVMFDLPFNPDLLEQRIGRLDRIGQAHDIQIHVPYLEKTAQSVLVRWYHEGLDAFEHTCPTGRTIYDSVYNDLINYLASPDQTEGFDDLIKNCREQHEALKAQLEQGRDRLLEIHSNGGEKAQALAESIEEQDDDTNLIAFAMNLFDIIGINQDDRGDNMIVLTPSDHMLVPDFPGLSEDGITITFDREVALAREDAQFITWEHPLIRNGLDLILSGDTGSSTISLLKNKALPVGTLLVELIYVVEAQAPKQLQLNRFLPPTPVRMLLDKNGNNLAAQVEFETFNRQLNAVNRHTGSKLVNAVQQDVHAILQLGEAQIEKSARALIDAARNEADEKLSAELSRLEALRAVNPNIRDDELTAIESNRQQVMESLDQAGWRLDALRLIVVTHQ</sequence>
<evidence type="ECO:0000250" key="1"/>
<evidence type="ECO:0000269" key="2">
    <source>
    </source>
</evidence>
<evidence type="ECO:0000269" key="3">
    <source>
    </source>
</evidence>
<evidence type="ECO:0000269" key="4">
    <source>
    </source>
</evidence>
<evidence type="ECO:0000269" key="5">
    <source>
    </source>
</evidence>
<evidence type="ECO:0000305" key="6"/>
<evidence type="ECO:0007829" key="7">
    <source>
        <dbReference type="PDB" id="7M8E"/>
    </source>
</evidence>
<evidence type="ECO:0007829" key="8">
    <source>
        <dbReference type="PDB" id="7MKN"/>
    </source>
</evidence>